<comment type="function">
    <text evidence="2">This multifunctional protein catalyzes the formation, breakage and rearrangement of disulfide bonds. At the cell surface, seems to act as a reductase that cleaves disulfide bonds of proteins attached to the cell. May therefore cause structural modifications of exofacial proteins. Inside the cell, seems to form/rearrange disulfide bonds of nascent proteins. At high concentrations and following phosphorylation by FAM20C, functions as a chaperone that inhibits aggregation of misfolded proteins. At low concentrations, facilitates aggregation (anti-chaperone activity). May be involved with other chaperones in the structural modification of the TG precursor in hormone biogenesis. Also acts as a structural subunit of various enzymes such as prolyl 4-hydroxylase and microsomal triacylglycerol transfer protein MTTP. Receptor for LGALS9; the interaction retains P4HB at the cell surface of Th2 T helper cells, increasing disulfide reductase activity at the plasma membrane, altering the plasma membrane redox state and enhancing cell migration.</text>
</comment>
<comment type="catalytic activity">
    <reaction evidence="2">
        <text>Catalyzes the rearrangement of -S-S- bonds in proteins.</text>
        <dbReference type="EC" id="5.3.4.1"/>
    </reaction>
</comment>
<comment type="subunit">
    <text evidence="2 3 6">Heterodimer; heterodimerizes with the protein microsomal triglyceride transfer MTTP (PubMed:2351674). Homodimer. Monomers and homotetramers may also occur. Interacts with P4HA2, forming a heterotetramer consisting of 2 alpha subunits (P4HA2) and 2 beta (P4HB), where P4HB plays the role of a structural subunit; this tetramer catalyzes the formation of 4-hydroxyproline in collagen (By similarity). Also constitutes the structural subunit of the microsomal triacylglycerol transfer protein MTTP in mammalian cells. Stabilizes both enzymes and retain them in the ER without contributing to the catalytic activity. Binds UBQLN1. Interacts with ERO1B (By similarity). Interacts with ILDR2 (By similarity). Interacts with ERN1/IRE1A (via N-terminus); the interaction is enhanced by phosphorylation of P4HB by FAM20C in response to endoplasmic reticulum stress and results in attenuation of ERN1 activity (By similarity).</text>
</comment>
<comment type="subcellular location">
    <subcellularLocation>
        <location evidence="2">Endoplasmic reticulum</location>
    </subcellularLocation>
    <subcellularLocation>
        <location evidence="2">Endoplasmic reticulum lumen</location>
    </subcellularLocation>
    <subcellularLocation>
        <location evidence="2">Melanosome</location>
    </subcellularLocation>
    <subcellularLocation>
        <location evidence="3">Cell membrane</location>
        <topology evidence="8">Peripheral membrane protein</topology>
    </subcellularLocation>
    <text evidence="2">Highly abundant. In some cell types, seems to be also secreted or associated with the plasma membrane, where it undergoes constant shedding and replacement from intracellular sources. Localizes near CD4-enriched regions on lymphoid cell surfaces. Colocalizes with MTTP in the endoplasmic reticulum.</text>
</comment>
<comment type="PTM">
    <text evidence="2">Phosphorylation of Ser-359 by FAM20C is induced by endoplasmic reticulum stress and results in a functional switch from oxidoreductase to molecular chaperone. It also promotes interaction with ERN1.</text>
</comment>
<comment type="similarity">
    <text evidence="8">Belongs to the protein disulfide isomerase family.</text>
</comment>
<accession>P05307</accession>
<name>PDIA1_BOVIN</name>
<organism>
    <name type="scientific">Bos taurus</name>
    <name type="common">Bovine</name>
    <dbReference type="NCBI Taxonomy" id="9913"/>
    <lineage>
        <taxon>Eukaryota</taxon>
        <taxon>Metazoa</taxon>
        <taxon>Chordata</taxon>
        <taxon>Craniata</taxon>
        <taxon>Vertebrata</taxon>
        <taxon>Euteleostomi</taxon>
        <taxon>Mammalia</taxon>
        <taxon>Eutheria</taxon>
        <taxon>Laurasiatheria</taxon>
        <taxon>Artiodactyla</taxon>
        <taxon>Ruminantia</taxon>
        <taxon>Pecora</taxon>
        <taxon>Bovidae</taxon>
        <taxon>Bovinae</taxon>
        <taxon>Bos</taxon>
    </lineage>
</organism>
<reference key="1">
    <citation type="journal article" date="1987" name="Biochem. Biophys. Res. Commun.">
        <title>Sequence of membrane-associated thyroid hormone binding protein from bovine liver: its identity with protein disulphide isomerase.</title>
        <authorList>
            <person name="Yamauchi K."/>
            <person name="Yamamoto T."/>
            <person name="Hayashi H."/>
            <person name="Koya S."/>
            <person name="Takikawa H."/>
            <person name="Toyoshima K."/>
            <person name="Horiuchi R."/>
        </authorList>
    </citation>
    <scope>NUCLEOTIDE SEQUENCE [MRNA]</scope>
    <source>
        <tissue>Liver</tissue>
    </source>
</reference>
<reference key="2">
    <citation type="journal article" date="1990" name="J. Biol. Chem.">
        <title>Protein disulfide isomerase is a component of the microsomal triglyceride transfer protein complex.</title>
        <authorList>
            <person name="Wetterau J.R."/>
            <person name="Combs K.A."/>
            <person name="Spinner S.N."/>
            <person name="Joiner B.J."/>
        </authorList>
    </citation>
    <scope>PROTEIN SEQUENCE OF 21-45</scope>
    <scope>INTERACTION WITH MTTP</scope>
</reference>
<reference key="3">
    <citation type="submission" date="2007-04" db="UniProtKB">
        <authorList>
            <person name="Parkinson D."/>
        </authorList>
    </citation>
    <scope>PROTEIN SEQUENCE OF 21-32</scope>
</reference>
<evidence type="ECO:0000250" key="1"/>
<evidence type="ECO:0000250" key="2">
    <source>
        <dbReference type="UniProtKB" id="P07237"/>
    </source>
</evidence>
<evidence type="ECO:0000250" key="3">
    <source>
        <dbReference type="UniProtKB" id="P09103"/>
    </source>
</evidence>
<evidence type="ECO:0000255" key="4">
    <source>
        <dbReference type="PROSITE-ProRule" id="PRU00691"/>
    </source>
</evidence>
<evidence type="ECO:0000256" key="5">
    <source>
        <dbReference type="SAM" id="MobiDB-lite"/>
    </source>
</evidence>
<evidence type="ECO:0000269" key="6">
    <source>
    </source>
</evidence>
<evidence type="ECO:0000269" key="7">
    <source ref="3"/>
</evidence>
<evidence type="ECO:0000305" key="8"/>
<gene>
    <name type="primary">P4HB</name>
    <name type="synonym">PDIA1</name>
</gene>
<protein>
    <recommendedName>
        <fullName>Protein disulfide-isomerase</fullName>
        <shortName>PDI</shortName>
        <ecNumber evidence="2">5.3.4.1</ecNumber>
    </recommendedName>
    <alternativeName>
        <fullName>Cellular thyroid hormone-binding protein</fullName>
    </alternativeName>
    <alternativeName>
        <fullName>Prolyl 4-hydroxylase subunit beta</fullName>
    </alternativeName>
    <alternativeName>
        <fullName>p55</fullName>
    </alternativeName>
</protein>
<sequence>MLRRALLCLALTALFRAGAGAPDEEDHVLVLHKGNFDEALAAHKYLLVEFYAPWCGHCKALAPEYAKAAGKLKAEGSEIRLAKVDATEESDLAQQYGVRGYPTIKFFKNGDTASPKEYTAGREADDIVNWLKKRTGPAASTLSDGAAAEALVESSEVAVIGFFKDMESDSAKQFFLAAEVIDDIPFGITSNSDVFSKYQLDKDGVVLFKKFDEGRNNFEGEVTKEKLLDFIKHNQLPLVIEFTEQTAPKIFGGEIKTHILLFLPKSVSDYEGKLSNFKKAAESFKGKILFIFIDSDHTDNQRILEFFGLKKEECPAVRLITLEEEMTKYKPESDELTAEKITEFCHRFLEGKIKPHLMSQELPDDWDKQPVKVLVGKNFEEVAFDEKKNVFVEFYAPWCGHCKQLAPIWDKLGETYKDHENIVIAKMDSTANEVEAVKVHSFPTLKFFPASADRTVIDYNGERTLDGFKKFLESGGQDGAGDDDDLEDLEEAEEPDLEEDDDQKAVKDEL</sequence>
<dbReference type="EC" id="5.3.4.1" evidence="2"/>
<dbReference type="EMBL" id="M17596">
    <property type="protein sequence ID" value="AAA30690.1"/>
    <property type="molecule type" value="mRNA"/>
</dbReference>
<dbReference type="PIR" id="A26829">
    <property type="entry name" value="ISBOSS"/>
</dbReference>
<dbReference type="RefSeq" id="NP_776560.1">
    <property type="nucleotide sequence ID" value="NM_174135.3"/>
</dbReference>
<dbReference type="SASBDB" id="P05307"/>
<dbReference type="SMR" id="P05307"/>
<dbReference type="BioGRID" id="158707">
    <property type="interactions" value="1"/>
</dbReference>
<dbReference type="FunCoup" id="P05307">
    <property type="interactions" value="2501"/>
</dbReference>
<dbReference type="STRING" id="9913.ENSBTAP00000007943"/>
<dbReference type="BindingDB" id="P05307"/>
<dbReference type="ChEMBL" id="CHEMBL4630809"/>
<dbReference type="PaxDb" id="9913-ENSBTAP00000007943"/>
<dbReference type="PeptideAtlas" id="P05307"/>
<dbReference type="KEGG" id="bta:281373"/>
<dbReference type="CTD" id="5034"/>
<dbReference type="eggNOG" id="KOG0190">
    <property type="taxonomic scope" value="Eukaryota"/>
</dbReference>
<dbReference type="InParanoid" id="P05307"/>
<dbReference type="OrthoDB" id="72053at2759"/>
<dbReference type="BioCyc" id="MetaCyc:MONOMER-15199"/>
<dbReference type="Proteomes" id="UP000009136">
    <property type="component" value="Unplaced"/>
</dbReference>
<dbReference type="GO" id="GO:0005783">
    <property type="term" value="C:endoplasmic reticulum"/>
    <property type="evidence" value="ECO:0000250"/>
    <property type="project" value="UniProtKB"/>
</dbReference>
<dbReference type="GO" id="GO:0005788">
    <property type="term" value="C:endoplasmic reticulum lumen"/>
    <property type="evidence" value="ECO:0007669"/>
    <property type="project" value="UniProtKB-SubCell"/>
</dbReference>
<dbReference type="GO" id="GO:0009897">
    <property type="term" value="C:external side of plasma membrane"/>
    <property type="evidence" value="ECO:0000318"/>
    <property type="project" value="GO_Central"/>
</dbReference>
<dbReference type="GO" id="GO:0042470">
    <property type="term" value="C:melanosome"/>
    <property type="evidence" value="ECO:0007669"/>
    <property type="project" value="UniProtKB-SubCell"/>
</dbReference>
<dbReference type="GO" id="GO:0004656">
    <property type="term" value="F:procollagen-proline 4-dioxygenase activity"/>
    <property type="evidence" value="ECO:0000250"/>
    <property type="project" value="AgBase"/>
</dbReference>
<dbReference type="GO" id="GO:0003756">
    <property type="term" value="F:protein disulfide isomerase activity"/>
    <property type="evidence" value="ECO:0000318"/>
    <property type="project" value="GO_Central"/>
</dbReference>
<dbReference type="GO" id="GO:0046982">
    <property type="term" value="F:protein heterodimerization activity"/>
    <property type="evidence" value="ECO:0000250"/>
    <property type="project" value="UniProtKB"/>
</dbReference>
<dbReference type="GO" id="GO:0018401">
    <property type="term" value="P:peptidyl-proline hydroxylation to 4-hydroxy-L-proline"/>
    <property type="evidence" value="ECO:0000250"/>
    <property type="project" value="AgBase"/>
</dbReference>
<dbReference type="GO" id="GO:0006457">
    <property type="term" value="P:protein folding"/>
    <property type="evidence" value="ECO:0000318"/>
    <property type="project" value="GO_Central"/>
</dbReference>
<dbReference type="GO" id="GO:0034976">
    <property type="term" value="P:response to endoplasmic reticulum stress"/>
    <property type="evidence" value="ECO:0000318"/>
    <property type="project" value="GO_Central"/>
</dbReference>
<dbReference type="CDD" id="cd02961">
    <property type="entry name" value="PDI_a_family"/>
    <property type="match status" value="1"/>
</dbReference>
<dbReference type="CDD" id="cd02995">
    <property type="entry name" value="PDI_a_PDI_a'_C"/>
    <property type="match status" value="1"/>
</dbReference>
<dbReference type="CDD" id="cd02982">
    <property type="entry name" value="PDI_b'_family"/>
    <property type="match status" value="1"/>
</dbReference>
<dbReference type="CDD" id="cd02981">
    <property type="entry name" value="PDI_b_family"/>
    <property type="match status" value="1"/>
</dbReference>
<dbReference type="FunFam" id="3.40.30.10:FF:000023">
    <property type="entry name" value="Protein disulfide-isomerase"/>
    <property type="match status" value="1"/>
</dbReference>
<dbReference type="FunFam" id="3.40.30.10:FF:000030">
    <property type="entry name" value="Protein disulfide-isomerase"/>
    <property type="match status" value="1"/>
</dbReference>
<dbReference type="FunFam" id="3.40.30.10:FF:000110">
    <property type="entry name" value="Protein disulfide-isomerase"/>
    <property type="match status" value="1"/>
</dbReference>
<dbReference type="FunFam" id="3.40.30.10:FF:000027">
    <property type="entry name" value="protein disulfide-isomerase A2"/>
    <property type="match status" value="1"/>
</dbReference>
<dbReference type="Gene3D" id="3.40.30.10">
    <property type="entry name" value="Glutaredoxin"/>
    <property type="match status" value="4"/>
</dbReference>
<dbReference type="InterPro" id="IPR005788">
    <property type="entry name" value="PDI_thioredoxin-like_dom"/>
</dbReference>
<dbReference type="InterPro" id="IPR005792">
    <property type="entry name" value="Prot_disulphide_isomerase"/>
</dbReference>
<dbReference type="InterPro" id="IPR036249">
    <property type="entry name" value="Thioredoxin-like_sf"/>
</dbReference>
<dbReference type="InterPro" id="IPR017937">
    <property type="entry name" value="Thioredoxin_CS"/>
</dbReference>
<dbReference type="InterPro" id="IPR013766">
    <property type="entry name" value="Thioredoxin_domain"/>
</dbReference>
<dbReference type="NCBIfam" id="TIGR01130">
    <property type="entry name" value="ER_PDI_fam"/>
    <property type="match status" value="1"/>
</dbReference>
<dbReference type="NCBIfam" id="TIGR01126">
    <property type="entry name" value="pdi_dom"/>
    <property type="match status" value="2"/>
</dbReference>
<dbReference type="PANTHER" id="PTHR18929">
    <property type="entry name" value="PROTEIN DISULFIDE ISOMERASE"/>
    <property type="match status" value="1"/>
</dbReference>
<dbReference type="PANTHER" id="PTHR18929:SF101">
    <property type="entry name" value="PROTEIN DISULFIDE-ISOMERASE"/>
    <property type="match status" value="1"/>
</dbReference>
<dbReference type="Pfam" id="PF00085">
    <property type="entry name" value="Thioredoxin"/>
    <property type="match status" value="2"/>
</dbReference>
<dbReference type="Pfam" id="PF13848">
    <property type="entry name" value="Thioredoxin_6"/>
    <property type="match status" value="1"/>
</dbReference>
<dbReference type="PRINTS" id="PR00421">
    <property type="entry name" value="THIOREDOXIN"/>
</dbReference>
<dbReference type="SUPFAM" id="SSF52833">
    <property type="entry name" value="Thioredoxin-like"/>
    <property type="match status" value="4"/>
</dbReference>
<dbReference type="PROSITE" id="PS00014">
    <property type="entry name" value="ER_TARGET"/>
    <property type="match status" value="1"/>
</dbReference>
<dbReference type="PROSITE" id="PS00194">
    <property type="entry name" value="THIOREDOXIN_1"/>
    <property type="match status" value="2"/>
</dbReference>
<dbReference type="PROSITE" id="PS51352">
    <property type="entry name" value="THIOREDOXIN_2"/>
    <property type="match status" value="2"/>
</dbReference>
<keyword id="KW-0007">Acetylation</keyword>
<keyword id="KW-1003">Cell membrane</keyword>
<keyword id="KW-0143">Chaperone</keyword>
<keyword id="KW-0903">Direct protein sequencing</keyword>
<keyword id="KW-1015">Disulfide bond</keyword>
<keyword id="KW-0256">Endoplasmic reticulum</keyword>
<keyword id="KW-0413">Isomerase</keyword>
<keyword id="KW-0472">Membrane</keyword>
<keyword id="KW-0597">Phosphoprotein</keyword>
<keyword id="KW-0676">Redox-active center</keyword>
<keyword id="KW-1185">Reference proteome</keyword>
<keyword id="KW-0677">Repeat</keyword>
<keyword id="KW-0732">Signal</keyword>
<proteinExistence type="evidence at protein level"/>
<feature type="signal peptide" evidence="6 7">
    <location>
        <begin position="1"/>
        <end position="20"/>
    </location>
</feature>
<feature type="chain" id="PRO_0000034193" description="Protein disulfide-isomerase">
    <location>
        <begin position="21"/>
        <end position="510"/>
    </location>
</feature>
<feature type="domain" description="Thioredoxin 1" evidence="4">
    <location>
        <begin position="27"/>
        <end position="136"/>
    </location>
</feature>
<feature type="domain" description="Thioredoxin 2" evidence="4">
    <location>
        <begin position="351"/>
        <end position="477"/>
    </location>
</feature>
<feature type="region of interest" description="Disordered" evidence="5">
    <location>
        <begin position="473"/>
        <end position="510"/>
    </location>
</feature>
<feature type="short sequence motif" description="Prevents secretion from ER">
    <location>
        <begin position="507"/>
        <end position="510"/>
    </location>
</feature>
<feature type="compositionally biased region" description="Acidic residues" evidence="5">
    <location>
        <begin position="480"/>
        <end position="502"/>
    </location>
</feature>
<feature type="active site" description="Nucleophile" evidence="1">
    <location>
        <position position="55"/>
    </location>
</feature>
<feature type="active site" description="Nucleophile" evidence="1">
    <location>
        <position position="58"/>
    </location>
</feature>
<feature type="active site" description="Nucleophile" evidence="1">
    <location>
        <position position="399"/>
    </location>
</feature>
<feature type="active site" description="Nucleophile" evidence="1">
    <location>
        <position position="402"/>
    </location>
</feature>
<feature type="site" description="Contributes to redox potential value" evidence="1">
    <location>
        <position position="56"/>
    </location>
</feature>
<feature type="site" description="Contributes to redox potential value" evidence="1">
    <location>
        <position position="57"/>
    </location>
</feature>
<feature type="site" description="Lowers pKa of C-terminal Cys of first active site" evidence="1">
    <location>
        <position position="122"/>
    </location>
</feature>
<feature type="site" description="Contributes to redox potential value" evidence="1">
    <location>
        <position position="400"/>
    </location>
</feature>
<feature type="site" description="Contributes to redox potential value" evidence="1">
    <location>
        <position position="401"/>
    </location>
</feature>
<feature type="site" description="Lowers pKa of C-terminal Cys of second active site" evidence="1">
    <location>
        <position position="463"/>
    </location>
</feature>
<feature type="modified residue" description="N6-acetyllysine" evidence="3">
    <location>
        <position position="202"/>
    </location>
</feature>
<feature type="modified residue" description="N6-succinyllysine" evidence="3">
    <location>
        <position position="224"/>
    </location>
</feature>
<feature type="modified residue" description="N6-succinyllysine" evidence="3">
    <location>
        <position position="273"/>
    </location>
</feature>
<feature type="modified residue" description="Phosphoserine" evidence="2">
    <location>
        <position position="333"/>
    </location>
</feature>
<feature type="modified residue" description="Phosphoserine" evidence="2">
    <location>
        <position position="359"/>
    </location>
</feature>
<feature type="modified residue" description="Phosphoserine" evidence="2">
    <location>
        <position position="429"/>
    </location>
</feature>
<feature type="disulfide bond" description="Redox-active" evidence="4">
    <location>
        <begin position="55"/>
        <end position="58"/>
    </location>
</feature>
<feature type="disulfide bond" description="Redox-active" evidence="4">
    <location>
        <begin position="399"/>
        <end position="402"/>
    </location>
</feature>